<proteinExistence type="predicted"/>
<comment type="subcellular location">
    <subcellularLocation>
        <location>Plastid</location>
        <location>Chloroplast</location>
    </subcellularLocation>
</comment>
<protein>
    <recommendedName>
        <fullName>Uncharacterized 19.8 kDa protein in petA-petL intergenic region</fullName>
    </recommendedName>
</protein>
<sequence>MICKNSIVTSSSKLFYKMFFIAISIEILEYNYIYPLCIEIAQHSGNIKIALCLKEILQKKKYNLILLKIASIVISNFLSTNTYSFIYTPYDVEILFSNLLLEKYEKDKEMSYMIDVFTKLSHLKQNIIYPYLFNQLKHDCNKKHIFLLLKKIDYTDISTFTHSIFIK</sequence>
<organism>
    <name type="scientific">Mesostigma viride</name>
    <name type="common">Green alga</name>
    <dbReference type="NCBI Taxonomy" id="41882"/>
    <lineage>
        <taxon>Eukaryota</taxon>
        <taxon>Viridiplantae</taxon>
        <taxon>Streptophyta</taxon>
        <taxon>Mesostigmatophyceae</taxon>
        <taxon>Mesostigmatales</taxon>
        <taxon>Mesostigmataceae</taxon>
        <taxon>Mesostigma</taxon>
    </lineage>
</organism>
<name>YCX2_MESVI</name>
<accession>Q9MUN5</accession>
<dbReference type="EMBL" id="AF166114">
    <property type="protein sequence ID" value="AAF43865.1"/>
    <property type="molecule type" value="Genomic_DNA"/>
</dbReference>
<dbReference type="RefSeq" id="NP_038425.1">
    <property type="nucleotide sequence ID" value="NC_002186.1"/>
</dbReference>
<dbReference type="SMR" id="Q9MUN5"/>
<dbReference type="GeneID" id="1403686"/>
<dbReference type="GO" id="GO:0009507">
    <property type="term" value="C:chloroplast"/>
    <property type="evidence" value="ECO:0007669"/>
    <property type="project" value="UniProtKB-SubCell"/>
</dbReference>
<geneLocation type="chloroplast"/>
<feature type="chain" id="PRO_0000217448" description="Uncharacterized 19.8 kDa protein in petA-petL intergenic region">
    <location>
        <begin position="1"/>
        <end position="167"/>
    </location>
</feature>
<reference key="1">
    <citation type="journal article" date="2000" name="Nature">
        <title>Ancestral chloroplast genome in Mesostigma viride reveals an early branch of green plant evolution.</title>
        <authorList>
            <person name="Lemieux C."/>
            <person name="Otis C."/>
            <person name="Turmel M."/>
        </authorList>
    </citation>
    <scope>NUCLEOTIDE SEQUENCE [LARGE SCALE GENOMIC DNA]</scope>
    <source>
        <strain>NIES-296 / KY-14 / CCMP 2046</strain>
    </source>
</reference>
<keyword id="KW-0150">Chloroplast</keyword>
<keyword id="KW-0934">Plastid</keyword>